<comment type="similarity">
    <text evidence="1">Belongs to the bacterial ribosomal protein bL27 family.</text>
</comment>
<accession>Q2JNE2</accession>
<protein>
    <recommendedName>
        <fullName evidence="1">Large ribosomal subunit protein bL27</fullName>
    </recommendedName>
    <alternativeName>
        <fullName evidence="3">50S ribosomal protein L27</fullName>
    </alternativeName>
</protein>
<reference key="1">
    <citation type="journal article" date="2007" name="ISME J.">
        <title>Population level functional diversity in a microbial community revealed by comparative genomic and metagenomic analyses.</title>
        <authorList>
            <person name="Bhaya D."/>
            <person name="Grossman A.R."/>
            <person name="Steunou A.-S."/>
            <person name="Khuri N."/>
            <person name="Cohan F.M."/>
            <person name="Hamamura N."/>
            <person name="Melendrez M.C."/>
            <person name="Bateson M.M."/>
            <person name="Ward D.M."/>
            <person name="Heidelberg J.F."/>
        </authorList>
    </citation>
    <scope>NUCLEOTIDE SEQUENCE [LARGE SCALE GENOMIC DNA]</scope>
    <source>
        <strain>JA-2-3B'a(2-13)</strain>
    </source>
</reference>
<gene>
    <name evidence="1" type="primary">rpmA</name>
    <name evidence="1" type="synonym">rpl27</name>
    <name type="ordered locus">CYB_0741</name>
</gene>
<organism>
    <name type="scientific">Synechococcus sp. (strain JA-2-3B'a(2-13))</name>
    <name type="common">Cyanobacteria bacterium Yellowstone B-Prime</name>
    <dbReference type="NCBI Taxonomy" id="321332"/>
    <lineage>
        <taxon>Bacteria</taxon>
        <taxon>Bacillati</taxon>
        <taxon>Cyanobacteriota</taxon>
        <taxon>Cyanophyceae</taxon>
        <taxon>Synechococcales</taxon>
        <taxon>Synechococcaceae</taxon>
        <taxon>Synechococcus</taxon>
    </lineage>
</organism>
<evidence type="ECO:0000255" key="1">
    <source>
        <dbReference type="HAMAP-Rule" id="MF_00539"/>
    </source>
</evidence>
<evidence type="ECO:0000256" key="2">
    <source>
        <dbReference type="SAM" id="MobiDB-lite"/>
    </source>
</evidence>
<evidence type="ECO:0000305" key="3"/>
<dbReference type="EMBL" id="CP000240">
    <property type="protein sequence ID" value="ABD01724.1"/>
    <property type="molecule type" value="Genomic_DNA"/>
</dbReference>
<dbReference type="RefSeq" id="WP_011432382.1">
    <property type="nucleotide sequence ID" value="NC_007776.1"/>
</dbReference>
<dbReference type="SMR" id="Q2JNE2"/>
<dbReference type="STRING" id="321332.CYB_0741"/>
<dbReference type="KEGG" id="cyb:CYB_0741"/>
<dbReference type="eggNOG" id="COG0211">
    <property type="taxonomic scope" value="Bacteria"/>
</dbReference>
<dbReference type="HOGENOM" id="CLU_095424_4_0_3"/>
<dbReference type="OrthoDB" id="9803474at2"/>
<dbReference type="Proteomes" id="UP000001938">
    <property type="component" value="Chromosome"/>
</dbReference>
<dbReference type="GO" id="GO:0022625">
    <property type="term" value="C:cytosolic large ribosomal subunit"/>
    <property type="evidence" value="ECO:0007669"/>
    <property type="project" value="TreeGrafter"/>
</dbReference>
<dbReference type="GO" id="GO:0003735">
    <property type="term" value="F:structural constituent of ribosome"/>
    <property type="evidence" value="ECO:0007669"/>
    <property type="project" value="InterPro"/>
</dbReference>
<dbReference type="GO" id="GO:0006412">
    <property type="term" value="P:translation"/>
    <property type="evidence" value="ECO:0007669"/>
    <property type="project" value="UniProtKB-UniRule"/>
</dbReference>
<dbReference type="FunFam" id="2.40.50.100:FF:000004">
    <property type="entry name" value="50S ribosomal protein L27"/>
    <property type="match status" value="1"/>
</dbReference>
<dbReference type="Gene3D" id="2.40.50.100">
    <property type="match status" value="1"/>
</dbReference>
<dbReference type="HAMAP" id="MF_00539">
    <property type="entry name" value="Ribosomal_bL27"/>
    <property type="match status" value="1"/>
</dbReference>
<dbReference type="InterPro" id="IPR001684">
    <property type="entry name" value="Ribosomal_bL27"/>
</dbReference>
<dbReference type="InterPro" id="IPR018261">
    <property type="entry name" value="Ribosomal_bL27_CS"/>
</dbReference>
<dbReference type="NCBIfam" id="TIGR00062">
    <property type="entry name" value="L27"/>
    <property type="match status" value="1"/>
</dbReference>
<dbReference type="PANTHER" id="PTHR15893:SF0">
    <property type="entry name" value="LARGE RIBOSOMAL SUBUNIT PROTEIN BL27M"/>
    <property type="match status" value="1"/>
</dbReference>
<dbReference type="PANTHER" id="PTHR15893">
    <property type="entry name" value="RIBOSOMAL PROTEIN L27"/>
    <property type="match status" value="1"/>
</dbReference>
<dbReference type="Pfam" id="PF01016">
    <property type="entry name" value="Ribosomal_L27"/>
    <property type="match status" value="1"/>
</dbReference>
<dbReference type="PRINTS" id="PR00063">
    <property type="entry name" value="RIBOSOMALL27"/>
</dbReference>
<dbReference type="SUPFAM" id="SSF110324">
    <property type="entry name" value="Ribosomal L27 protein-like"/>
    <property type="match status" value="1"/>
</dbReference>
<dbReference type="PROSITE" id="PS00831">
    <property type="entry name" value="RIBOSOMAL_L27"/>
    <property type="match status" value="1"/>
</dbReference>
<sequence>MAHKKGTGSTRNGRDSNAKRLGVKRYGGELVHPGHILVRQRGTKFHPGVNVRIGGDDTLYSVVTGIVTFERYGKWRQKVSVYPAEVAAQ</sequence>
<proteinExistence type="inferred from homology"/>
<keyword id="KW-1185">Reference proteome</keyword>
<keyword id="KW-0687">Ribonucleoprotein</keyword>
<keyword id="KW-0689">Ribosomal protein</keyword>
<name>RL27_SYNJB</name>
<feature type="chain" id="PRO_1000017631" description="Large ribosomal subunit protein bL27">
    <location>
        <begin position="1"/>
        <end position="89"/>
    </location>
</feature>
<feature type="region of interest" description="Disordered" evidence="2">
    <location>
        <begin position="1"/>
        <end position="24"/>
    </location>
</feature>